<reference key="1">
    <citation type="journal article" date="2009" name="BMC Genomics">
        <title>Metabolic analysis of the soil microbe Dechloromonas aromatica str. RCB: indications of a surprisingly complex life-style and cryptic anaerobic pathways for aromatic degradation.</title>
        <authorList>
            <person name="Salinero K.K."/>
            <person name="Keller K."/>
            <person name="Feil W.S."/>
            <person name="Feil H."/>
            <person name="Trong S."/>
            <person name="Di Bartolo G."/>
            <person name="Lapidus A."/>
        </authorList>
    </citation>
    <scope>NUCLEOTIDE SEQUENCE [LARGE SCALE GENOMIC DNA]</scope>
    <source>
        <strain>RCB</strain>
    </source>
</reference>
<accession>Q47I44</accession>
<sequence>MQHAYDEHLATNRYFDRKFGLEAAKILPGEYYVANQEALLVTVLGSCVAACIRDADSGIGGMNHFMLPDDGGRDKVGMSARYGTYAMEVLINHLLKLGARRNRFEAKVFGGGAVLASLASSNVGARNAEFVLDFLKTEKIPVVAKDLLDSYPRKVYYFPYSGKVLVKKLHRVHNDTLFSRENDYKVRLSGAPMDGDIELFI</sequence>
<name>CHED1_DECAR</name>
<proteinExistence type="inferred from homology"/>
<organism>
    <name type="scientific">Dechloromonas aromatica (strain RCB)</name>
    <dbReference type="NCBI Taxonomy" id="159087"/>
    <lineage>
        <taxon>Bacteria</taxon>
        <taxon>Pseudomonadati</taxon>
        <taxon>Pseudomonadota</taxon>
        <taxon>Betaproteobacteria</taxon>
        <taxon>Rhodocyclales</taxon>
        <taxon>Azonexaceae</taxon>
        <taxon>Dechloromonas</taxon>
    </lineage>
</organism>
<comment type="function">
    <text evidence="1">Probably deamidates glutamine residues to glutamate on methyl-accepting chemotaxis receptors (MCPs), playing an important role in chemotaxis.</text>
</comment>
<comment type="catalytic activity">
    <reaction evidence="1">
        <text>L-glutaminyl-[protein] + H2O = L-glutamyl-[protein] + NH4(+)</text>
        <dbReference type="Rhea" id="RHEA:16441"/>
        <dbReference type="Rhea" id="RHEA-COMP:10207"/>
        <dbReference type="Rhea" id="RHEA-COMP:10208"/>
        <dbReference type="ChEBI" id="CHEBI:15377"/>
        <dbReference type="ChEBI" id="CHEBI:28938"/>
        <dbReference type="ChEBI" id="CHEBI:29973"/>
        <dbReference type="ChEBI" id="CHEBI:30011"/>
        <dbReference type="EC" id="3.5.1.44"/>
    </reaction>
</comment>
<comment type="similarity">
    <text evidence="1">Belongs to the CheD family.</text>
</comment>
<protein>
    <recommendedName>
        <fullName evidence="1">Probable chemoreceptor glutamine deamidase CheD 1</fullName>
        <ecNumber evidence="1">3.5.1.44</ecNumber>
    </recommendedName>
</protein>
<evidence type="ECO:0000255" key="1">
    <source>
        <dbReference type="HAMAP-Rule" id="MF_01440"/>
    </source>
</evidence>
<feature type="chain" id="PRO_0000251026" description="Probable chemoreceptor glutamine deamidase CheD 1">
    <location>
        <begin position="1"/>
        <end position="201"/>
    </location>
</feature>
<gene>
    <name evidence="1" type="primary">cheD1</name>
    <name type="ordered locus">Daro_0731</name>
</gene>
<dbReference type="EC" id="3.5.1.44" evidence="1"/>
<dbReference type="EMBL" id="CP000089">
    <property type="protein sequence ID" value="AAZ45487.1"/>
    <property type="molecule type" value="Genomic_DNA"/>
</dbReference>
<dbReference type="SMR" id="Q47I44"/>
<dbReference type="STRING" id="159087.Daro_0731"/>
<dbReference type="KEGG" id="dar:Daro_0731"/>
<dbReference type="eggNOG" id="COG1871">
    <property type="taxonomic scope" value="Bacteria"/>
</dbReference>
<dbReference type="HOGENOM" id="CLU_087854_0_0_4"/>
<dbReference type="OrthoDB" id="9807202at2"/>
<dbReference type="GO" id="GO:0050568">
    <property type="term" value="F:protein-glutamine glutaminase activity"/>
    <property type="evidence" value="ECO:0007669"/>
    <property type="project" value="UniProtKB-UniRule"/>
</dbReference>
<dbReference type="GO" id="GO:0006935">
    <property type="term" value="P:chemotaxis"/>
    <property type="evidence" value="ECO:0007669"/>
    <property type="project" value="UniProtKB-UniRule"/>
</dbReference>
<dbReference type="CDD" id="cd16352">
    <property type="entry name" value="CheD"/>
    <property type="match status" value="1"/>
</dbReference>
<dbReference type="Gene3D" id="3.30.1330.200">
    <property type="match status" value="1"/>
</dbReference>
<dbReference type="HAMAP" id="MF_01440">
    <property type="entry name" value="CheD"/>
    <property type="match status" value="1"/>
</dbReference>
<dbReference type="InterPro" id="IPR038592">
    <property type="entry name" value="CheD-like_sf"/>
</dbReference>
<dbReference type="InterPro" id="IPR005659">
    <property type="entry name" value="Chemorcpt_Glu_NH3ase_CheD"/>
</dbReference>
<dbReference type="InterPro" id="IPR011324">
    <property type="entry name" value="Cytotoxic_necrot_fac-like_cat"/>
</dbReference>
<dbReference type="NCBIfam" id="NF010013">
    <property type="entry name" value="PRK13487.1"/>
    <property type="match status" value="1"/>
</dbReference>
<dbReference type="PANTHER" id="PTHR35147">
    <property type="entry name" value="CHEMORECEPTOR GLUTAMINE DEAMIDASE CHED-RELATED"/>
    <property type="match status" value="1"/>
</dbReference>
<dbReference type="PANTHER" id="PTHR35147:SF2">
    <property type="entry name" value="CHEMORECEPTOR GLUTAMINE DEAMIDASE CHED-RELATED"/>
    <property type="match status" value="1"/>
</dbReference>
<dbReference type="Pfam" id="PF03975">
    <property type="entry name" value="CheD"/>
    <property type="match status" value="1"/>
</dbReference>
<dbReference type="SUPFAM" id="SSF64438">
    <property type="entry name" value="CNF1/YfiH-like putative cysteine hydrolases"/>
    <property type="match status" value="1"/>
</dbReference>
<keyword id="KW-0145">Chemotaxis</keyword>
<keyword id="KW-0378">Hydrolase</keyword>